<dbReference type="EC" id="2.7.7.3" evidence="1"/>
<dbReference type="EMBL" id="CP001628">
    <property type="protein sequence ID" value="ACS30409.1"/>
    <property type="molecule type" value="Genomic_DNA"/>
</dbReference>
<dbReference type="RefSeq" id="WP_010078952.1">
    <property type="nucleotide sequence ID" value="NC_012803.1"/>
</dbReference>
<dbReference type="SMR" id="C5CAE0"/>
<dbReference type="STRING" id="465515.Mlut_08860"/>
<dbReference type="EnsemblBacteria" id="ACS30409">
    <property type="protein sequence ID" value="ACS30409"/>
    <property type="gene ID" value="Mlut_08860"/>
</dbReference>
<dbReference type="GeneID" id="93345047"/>
<dbReference type="KEGG" id="mlu:Mlut_08860"/>
<dbReference type="PATRIC" id="fig|465515.4.peg.846"/>
<dbReference type="eggNOG" id="COG0669">
    <property type="taxonomic scope" value="Bacteria"/>
</dbReference>
<dbReference type="HOGENOM" id="CLU_100149_1_0_11"/>
<dbReference type="UniPathway" id="UPA00241">
    <property type="reaction ID" value="UER00355"/>
</dbReference>
<dbReference type="Proteomes" id="UP000000738">
    <property type="component" value="Chromosome"/>
</dbReference>
<dbReference type="GO" id="GO:0005737">
    <property type="term" value="C:cytoplasm"/>
    <property type="evidence" value="ECO:0007669"/>
    <property type="project" value="UniProtKB-SubCell"/>
</dbReference>
<dbReference type="GO" id="GO:0005524">
    <property type="term" value="F:ATP binding"/>
    <property type="evidence" value="ECO:0007669"/>
    <property type="project" value="UniProtKB-KW"/>
</dbReference>
<dbReference type="GO" id="GO:0004595">
    <property type="term" value="F:pantetheine-phosphate adenylyltransferase activity"/>
    <property type="evidence" value="ECO:0007669"/>
    <property type="project" value="UniProtKB-UniRule"/>
</dbReference>
<dbReference type="GO" id="GO:0015937">
    <property type="term" value="P:coenzyme A biosynthetic process"/>
    <property type="evidence" value="ECO:0007669"/>
    <property type="project" value="UniProtKB-UniRule"/>
</dbReference>
<dbReference type="CDD" id="cd02163">
    <property type="entry name" value="PPAT"/>
    <property type="match status" value="1"/>
</dbReference>
<dbReference type="Gene3D" id="3.40.50.620">
    <property type="entry name" value="HUPs"/>
    <property type="match status" value="1"/>
</dbReference>
<dbReference type="HAMAP" id="MF_00151">
    <property type="entry name" value="PPAT_bact"/>
    <property type="match status" value="1"/>
</dbReference>
<dbReference type="InterPro" id="IPR004821">
    <property type="entry name" value="Cyt_trans-like"/>
</dbReference>
<dbReference type="InterPro" id="IPR001980">
    <property type="entry name" value="PPAT"/>
</dbReference>
<dbReference type="InterPro" id="IPR014729">
    <property type="entry name" value="Rossmann-like_a/b/a_fold"/>
</dbReference>
<dbReference type="NCBIfam" id="TIGR01510">
    <property type="entry name" value="coaD_prev_kdtB"/>
    <property type="match status" value="1"/>
</dbReference>
<dbReference type="NCBIfam" id="TIGR00125">
    <property type="entry name" value="cyt_tran_rel"/>
    <property type="match status" value="1"/>
</dbReference>
<dbReference type="PANTHER" id="PTHR21342">
    <property type="entry name" value="PHOSPHOPANTETHEINE ADENYLYLTRANSFERASE"/>
    <property type="match status" value="1"/>
</dbReference>
<dbReference type="PANTHER" id="PTHR21342:SF1">
    <property type="entry name" value="PHOSPHOPANTETHEINE ADENYLYLTRANSFERASE"/>
    <property type="match status" value="1"/>
</dbReference>
<dbReference type="Pfam" id="PF01467">
    <property type="entry name" value="CTP_transf_like"/>
    <property type="match status" value="1"/>
</dbReference>
<dbReference type="PRINTS" id="PR01020">
    <property type="entry name" value="LPSBIOSNTHSS"/>
</dbReference>
<dbReference type="SUPFAM" id="SSF52374">
    <property type="entry name" value="Nucleotidylyl transferase"/>
    <property type="match status" value="1"/>
</dbReference>
<feature type="chain" id="PRO_1000203429" description="Phosphopantetheine adenylyltransferase">
    <location>
        <begin position="1"/>
        <end position="157"/>
    </location>
</feature>
<feature type="binding site" evidence="1">
    <location>
        <begin position="9"/>
        <end position="10"/>
    </location>
    <ligand>
        <name>ATP</name>
        <dbReference type="ChEBI" id="CHEBI:30616"/>
    </ligand>
</feature>
<feature type="binding site" evidence="1">
    <location>
        <position position="9"/>
    </location>
    <ligand>
        <name>substrate</name>
    </ligand>
</feature>
<feature type="binding site" evidence="1">
    <location>
        <position position="17"/>
    </location>
    <ligand>
        <name>ATP</name>
        <dbReference type="ChEBI" id="CHEBI:30616"/>
    </ligand>
</feature>
<feature type="binding site" evidence="1">
    <location>
        <position position="41"/>
    </location>
    <ligand>
        <name>substrate</name>
    </ligand>
</feature>
<feature type="binding site" evidence="1">
    <location>
        <position position="74"/>
    </location>
    <ligand>
        <name>substrate</name>
    </ligand>
</feature>
<feature type="binding site" evidence="1">
    <location>
        <position position="88"/>
    </location>
    <ligand>
        <name>substrate</name>
    </ligand>
</feature>
<feature type="binding site" evidence="1">
    <location>
        <begin position="89"/>
        <end position="91"/>
    </location>
    <ligand>
        <name>ATP</name>
        <dbReference type="ChEBI" id="CHEBI:30616"/>
    </ligand>
</feature>
<feature type="binding site" evidence="1">
    <location>
        <position position="99"/>
    </location>
    <ligand>
        <name>ATP</name>
        <dbReference type="ChEBI" id="CHEBI:30616"/>
    </ligand>
</feature>
<feature type="binding site" evidence="1">
    <location>
        <begin position="123"/>
        <end position="129"/>
    </location>
    <ligand>
        <name>ATP</name>
        <dbReference type="ChEBI" id="CHEBI:30616"/>
    </ligand>
</feature>
<feature type="site" description="Transition state stabilizer" evidence="1">
    <location>
        <position position="17"/>
    </location>
</feature>
<keyword id="KW-0067">ATP-binding</keyword>
<keyword id="KW-0173">Coenzyme A biosynthesis</keyword>
<keyword id="KW-0963">Cytoplasm</keyword>
<keyword id="KW-0460">Magnesium</keyword>
<keyword id="KW-0547">Nucleotide-binding</keyword>
<keyword id="KW-0548">Nucleotidyltransferase</keyword>
<keyword id="KW-1185">Reference proteome</keyword>
<keyword id="KW-0808">Transferase</keyword>
<reference key="1">
    <citation type="journal article" date="2010" name="J. Bacteriol.">
        <title>Genome sequence of the Fleming strain of Micrococcus luteus, a simple free-living actinobacterium.</title>
        <authorList>
            <person name="Young M."/>
            <person name="Artsatbanov V."/>
            <person name="Beller H.R."/>
            <person name="Chandra G."/>
            <person name="Chater K.F."/>
            <person name="Dover L.G."/>
            <person name="Goh E.B."/>
            <person name="Kahan T."/>
            <person name="Kaprelyants A.S."/>
            <person name="Kyrpides N."/>
            <person name="Lapidus A."/>
            <person name="Lowry S.R."/>
            <person name="Lykidis A."/>
            <person name="Mahillon J."/>
            <person name="Markowitz V."/>
            <person name="Mavromatis K."/>
            <person name="Mukamolova G.V."/>
            <person name="Oren A."/>
            <person name="Rokem J.S."/>
            <person name="Smith M.C."/>
            <person name="Young D.I."/>
            <person name="Greenblatt C.L."/>
        </authorList>
    </citation>
    <scope>NUCLEOTIDE SEQUENCE [LARGE SCALE GENOMIC DNA]</scope>
    <source>
        <strain>ATCC 4698 / DSM 20030 / JCM 1464 / CCM 169 / CCUG 5858 / IAM 1056 / NBRC 3333 / NCIMB 9278 / NCTC 2665 / VKM Ac-2230</strain>
    </source>
</reference>
<evidence type="ECO:0000255" key="1">
    <source>
        <dbReference type="HAMAP-Rule" id="MF_00151"/>
    </source>
</evidence>
<sequence>MRRAVCPGSFDPLHKGHVEVIARAANLFEEVVVAVSANPAKTYRFSVDERIAMIEATVSSLAGVAVRPMGPGLLAEFCRQIGADAIVKGLRGGADLEFEAPMAAMNRHLTGVETVYLPADARYTHVSSSLIKEVHGLGGDVAEFVPAAVLRGLDGGA</sequence>
<organism>
    <name type="scientific">Micrococcus luteus (strain ATCC 4698 / DSM 20030 / JCM 1464 / CCM 169 / CCUG 5858 / IAM 1056 / NBRC 3333 / NCIMB 9278 / NCTC 2665 / VKM Ac-2230)</name>
    <name type="common">Micrococcus lysodeikticus</name>
    <dbReference type="NCBI Taxonomy" id="465515"/>
    <lineage>
        <taxon>Bacteria</taxon>
        <taxon>Bacillati</taxon>
        <taxon>Actinomycetota</taxon>
        <taxon>Actinomycetes</taxon>
        <taxon>Micrococcales</taxon>
        <taxon>Micrococcaceae</taxon>
        <taxon>Micrococcus</taxon>
    </lineage>
</organism>
<protein>
    <recommendedName>
        <fullName evidence="1">Phosphopantetheine adenylyltransferase</fullName>
        <ecNumber evidence="1">2.7.7.3</ecNumber>
    </recommendedName>
    <alternativeName>
        <fullName evidence="1">Dephospho-CoA pyrophosphorylase</fullName>
    </alternativeName>
    <alternativeName>
        <fullName evidence="1">Pantetheine-phosphate adenylyltransferase</fullName>
        <shortName evidence="1">PPAT</shortName>
    </alternativeName>
</protein>
<gene>
    <name evidence="1" type="primary">coaD</name>
    <name type="ordered locus">Mlut_08860</name>
</gene>
<proteinExistence type="inferred from homology"/>
<comment type="function">
    <text evidence="1">Reversibly transfers an adenylyl group from ATP to 4'-phosphopantetheine, yielding dephospho-CoA (dPCoA) and pyrophosphate.</text>
</comment>
<comment type="catalytic activity">
    <reaction evidence="1">
        <text>(R)-4'-phosphopantetheine + ATP + H(+) = 3'-dephospho-CoA + diphosphate</text>
        <dbReference type="Rhea" id="RHEA:19801"/>
        <dbReference type="ChEBI" id="CHEBI:15378"/>
        <dbReference type="ChEBI" id="CHEBI:30616"/>
        <dbReference type="ChEBI" id="CHEBI:33019"/>
        <dbReference type="ChEBI" id="CHEBI:57328"/>
        <dbReference type="ChEBI" id="CHEBI:61723"/>
        <dbReference type="EC" id="2.7.7.3"/>
    </reaction>
</comment>
<comment type="cofactor">
    <cofactor evidence="1">
        <name>Mg(2+)</name>
        <dbReference type="ChEBI" id="CHEBI:18420"/>
    </cofactor>
</comment>
<comment type="pathway">
    <text evidence="1">Cofactor biosynthesis; coenzyme A biosynthesis; CoA from (R)-pantothenate: step 4/5.</text>
</comment>
<comment type="subunit">
    <text evidence="1">Homohexamer.</text>
</comment>
<comment type="subcellular location">
    <subcellularLocation>
        <location evidence="1">Cytoplasm</location>
    </subcellularLocation>
</comment>
<comment type="similarity">
    <text evidence="1">Belongs to the bacterial CoaD family.</text>
</comment>
<name>COAD_MICLC</name>
<accession>C5CAE0</accession>